<sequence>MKKHRKKRSSSTQVQALAQHICMSAHKARRVIDQIRGRSYEKTLMLLELMPYRASYPILKLVYSAAANASHNKGFNKADLVISQAEVNGGTIIKKLKPRARGHSYPIKRPTCHINIVLKDQSKTKTQQDFVLENKGVFKDTIIERYPEKEREREREINFFKRLLRFPNWNRDK</sequence>
<gene>
    <name type="primary">rpl22</name>
</gene>
<keyword id="KW-0150">Chloroplast</keyword>
<keyword id="KW-0934">Plastid</keyword>
<keyword id="KW-0687">Ribonucleoprotein</keyword>
<keyword id="KW-0689">Ribosomal protein</keyword>
<keyword id="KW-0694">RNA-binding</keyword>
<keyword id="KW-0699">rRNA-binding</keyword>
<reference key="1">
    <citation type="journal article" date="2006" name="BMC Evol. Biol.">
        <title>Complete plastid genome sequences of Drimys, Liriodendron, and Piper: implications for the phylogenetic relationships of magnoliids.</title>
        <authorList>
            <person name="Cai Z."/>
            <person name="Penaflor C."/>
            <person name="Kuehl J.V."/>
            <person name="Leebens-Mack J."/>
            <person name="Carlson J.E."/>
            <person name="dePamphilis C.W."/>
            <person name="Boore J.L."/>
            <person name="Jansen R.K."/>
        </authorList>
    </citation>
    <scope>NUCLEOTIDE SEQUENCE [LARGE SCALE GENOMIC DNA]</scope>
</reference>
<organism>
    <name type="scientific">Drimys granadensis</name>
    <dbReference type="NCBI Taxonomy" id="224735"/>
    <lineage>
        <taxon>Eukaryota</taxon>
        <taxon>Viridiplantae</taxon>
        <taxon>Streptophyta</taxon>
        <taxon>Embryophyta</taxon>
        <taxon>Tracheophyta</taxon>
        <taxon>Spermatophyta</taxon>
        <taxon>Magnoliopsida</taxon>
        <taxon>Magnoliidae</taxon>
        <taxon>Canellales</taxon>
        <taxon>Winteraceae</taxon>
        <taxon>Drimys</taxon>
    </lineage>
</organism>
<evidence type="ECO:0000250" key="1"/>
<evidence type="ECO:0000305" key="2"/>
<comment type="function">
    <text evidence="1">This protein binds specifically to 23S rRNA.</text>
</comment>
<comment type="function">
    <text evidence="1">The globular domain of the protein is located near the polypeptide exit tunnel on the outside of the subunit, while an extended beta-hairpin is found that lines the wall of the exit tunnel in the center of the 70S ribosome.</text>
</comment>
<comment type="subunit">
    <text evidence="1">Part of the 50S ribosomal subunit.</text>
</comment>
<comment type="subcellular location">
    <subcellularLocation>
        <location>Plastid</location>
        <location>Chloroplast</location>
    </subcellularLocation>
</comment>
<comment type="similarity">
    <text evidence="2">Belongs to the universal ribosomal protein uL22 family.</text>
</comment>
<proteinExistence type="inferred from homology"/>
<feature type="chain" id="PRO_0000276444" description="Large ribosomal subunit protein uL22c">
    <location>
        <begin position="1"/>
        <end position="173"/>
    </location>
</feature>
<dbReference type="EMBL" id="DQ887676">
    <property type="protein sequence ID" value="ABH88336.1"/>
    <property type="molecule type" value="Genomic_DNA"/>
</dbReference>
<dbReference type="RefSeq" id="YP_784426.1">
    <property type="nucleotide sequence ID" value="NC_008456.1"/>
</dbReference>
<dbReference type="SMR" id="Q06GV7"/>
<dbReference type="GeneID" id="4363612"/>
<dbReference type="GO" id="GO:0009507">
    <property type="term" value="C:chloroplast"/>
    <property type="evidence" value="ECO:0007669"/>
    <property type="project" value="UniProtKB-SubCell"/>
</dbReference>
<dbReference type="GO" id="GO:0015934">
    <property type="term" value="C:large ribosomal subunit"/>
    <property type="evidence" value="ECO:0007669"/>
    <property type="project" value="InterPro"/>
</dbReference>
<dbReference type="GO" id="GO:0019843">
    <property type="term" value="F:rRNA binding"/>
    <property type="evidence" value="ECO:0007669"/>
    <property type="project" value="UniProtKB-UniRule"/>
</dbReference>
<dbReference type="GO" id="GO:0003735">
    <property type="term" value="F:structural constituent of ribosome"/>
    <property type="evidence" value="ECO:0007669"/>
    <property type="project" value="InterPro"/>
</dbReference>
<dbReference type="GO" id="GO:0006412">
    <property type="term" value="P:translation"/>
    <property type="evidence" value="ECO:0007669"/>
    <property type="project" value="UniProtKB-UniRule"/>
</dbReference>
<dbReference type="CDD" id="cd00336">
    <property type="entry name" value="Ribosomal_L22"/>
    <property type="match status" value="1"/>
</dbReference>
<dbReference type="FunFam" id="3.90.470.10:FF:000006">
    <property type="entry name" value="50S ribosomal protein L22, chloroplastic"/>
    <property type="match status" value="1"/>
</dbReference>
<dbReference type="Gene3D" id="3.90.470.10">
    <property type="entry name" value="Ribosomal protein L22/L17"/>
    <property type="match status" value="1"/>
</dbReference>
<dbReference type="HAMAP" id="MF_01331_B">
    <property type="entry name" value="Ribosomal_uL22_B"/>
    <property type="match status" value="1"/>
</dbReference>
<dbReference type="InterPro" id="IPR001063">
    <property type="entry name" value="Ribosomal_uL22"/>
</dbReference>
<dbReference type="InterPro" id="IPR005727">
    <property type="entry name" value="Ribosomal_uL22_bac/chlpt-type"/>
</dbReference>
<dbReference type="InterPro" id="IPR047867">
    <property type="entry name" value="Ribosomal_uL22_bac/org-type"/>
</dbReference>
<dbReference type="InterPro" id="IPR036394">
    <property type="entry name" value="Ribosomal_uL22_sf"/>
</dbReference>
<dbReference type="NCBIfam" id="TIGR01044">
    <property type="entry name" value="rplV_bact"/>
    <property type="match status" value="1"/>
</dbReference>
<dbReference type="PANTHER" id="PTHR13501">
    <property type="entry name" value="CHLOROPLAST 50S RIBOSOMAL PROTEIN L22-RELATED"/>
    <property type="match status" value="1"/>
</dbReference>
<dbReference type="PANTHER" id="PTHR13501:SF10">
    <property type="entry name" value="LARGE RIBOSOMAL SUBUNIT PROTEIN UL22M"/>
    <property type="match status" value="1"/>
</dbReference>
<dbReference type="Pfam" id="PF00237">
    <property type="entry name" value="Ribosomal_L22"/>
    <property type="match status" value="1"/>
</dbReference>
<dbReference type="SUPFAM" id="SSF54843">
    <property type="entry name" value="Ribosomal protein L22"/>
    <property type="match status" value="1"/>
</dbReference>
<name>RK22_DRIGR</name>
<accession>Q06GV7</accession>
<geneLocation type="chloroplast"/>
<protein>
    <recommendedName>
        <fullName evidence="2">Large ribosomal subunit protein uL22c</fullName>
    </recommendedName>
    <alternativeName>
        <fullName>50S ribosomal protein L22, chloroplastic</fullName>
    </alternativeName>
</protein>